<feature type="chain" id="PRO_0000129903" description="Small ribosomal subunit protein uS19">
    <location>
        <begin position="1"/>
        <end position="92"/>
    </location>
</feature>
<name>RS19_STAAS</name>
<protein>
    <recommendedName>
        <fullName evidence="1">Small ribosomal subunit protein uS19</fullName>
    </recommendedName>
    <alternativeName>
        <fullName evidence="2">30S ribosomal protein S19</fullName>
    </alternativeName>
</protein>
<organism>
    <name type="scientific">Staphylococcus aureus (strain MSSA476)</name>
    <dbReference type="NCBI Taxonomy" id="282459"/>
    <lineage>
        <taxon>Bacteria</taxon>
        <taxon>Bacillati</taxon>
        <taxon>Bacillota</taxon>
        <taxon>Bacilli</taxon>
        <taxon>Bacillales</taxon>
        <taxon>Staphylococcaceae</taxon>
        <taxon>Staphylococcus</taxon>
    </lineage>
</organism>
<sequence>MARSIKKGPFVDEHLMKKVEAQEGSEKKQVIKTWSRRSTIFPNFIGHTFAVYDGRKHVPVYVTEDMVGHKLGEFAPTRTFKGHVADDKKTRR</sequence>
<evidence type="ECO:0000255" key="1">
    <source>
        <dbReference type="HAMAP-Rule" id="MF_00531"/>
    </source>
</evidence>
<evidence type="ECO:0000305" key="2"/>
<keyword id="KW-0687">Ribonucleoprotein</keyword>
<keyword id="KW-0689">Ribosomal protein</keyword>
<keyword id="KW-0694">RNA-binding</keyword>
<keyword id="KW-0699">rRNA-binding</keyword>
<gene>
    <name evidence="1" type="primary">rpsS</name>
    <name type="ordered locus">SAS2137</name>
</gene>
<accession>Q6G775</accession>
<comment type="function">
    <text evidence="1">Protein S19 forms a complex with S13 that binds strongly to the 16S ribosomal RNA.</text>
</comment>
<comment type="similarity">
    <text evidence="1">Belongs to the universal ribosomal protein uS19 family.</text>
</comment>
<reference key="1">
    <citation type="journal article" date="2004" name="Proc. Natl. Acad. Sci. U.S.A.">
        <title>Complete genomes of two clinical Staphylococcus aureus strains: evidence for the rapid evolution of virulence and drug resistance.</title>
        <authorList>
            <person name="Holden M.T.G."/>
            <person name="Feil E.J."/>
            <person name="Lindsay J.A."/>
            <person name="Peacock S.J."/>
            <person name="Day N.P.J."/>
            <person name="Enright M.C."/>
            <person name="Foster T.J."/>
            <person name="Moore C.E."/>
            <person name="Hurst L."/>
            <person name="Atkin R."/>
            <person name="Barron A."/>
            <person name="Bason N."/>
            <person name="Bentley S.D."/>
            <person name="Chillingworth C."/>
            <person name="Chillingworth T."/>
            <person name="Churcher C."/>
            <person name="Clark L."/>
            <person name="Corton C."/>
            <person name="Cronin A."/>
            <person name="Doggett J."/>
            <person name="Dowd L."/>
            <person name="Feltwell T."/>
            <person name="Hance Z."/>
            <person name="Harris B."/>
            <person name="Hauser H."/>
            <person name="Holroyd S."/>
            <person name="Jagels K."/>
            <person name="James K.D."/>
            <person name="Lennard N."/>
            <person name="Line A."/>
            <person name="Mayes R."/>
            <person name="Moule S."/>
            <person name="Mungall K."/>
            <person name="Ormond D."/>
            <person name="Quail M.A."/>
            <person name="Rabbinowitsch E."/>
            <person name="Rutherford K.M."/>
            <person name="Sanders M."/>
            <person name="Sharp S."/>
            <person name="Simmonds M."/>
            <person name="Stevens K."/>
            <person name="Whitehead S."/>
            <person name="Barrell B.G."/>
            <person name="Spratt B.G."/>
            <person name="Parkhill J."/>
        </authorList>
    </citation>
    <scope>NUCLEOTIDE SEQUENCE [LARGE SCALE GENOMIC DNA]</scope>
    <source>
        <strain>MSSA476</strain>
    </source>
</reference>
<dbReference type="EMBL" id="BX571857">
    <property type="protein sequence ID" value="CAG43948.1"/>
    <property type="molecule type" value="Genomic_DNA"/>
</dbReference>
<dbReference type="RefSeq" id="WP_000124353.1">
    <property type="nucleotide sequence ID" value="NC_002953.3"/>
</dbReference>
<dbReference type="SMR" id="Q6G775"/>
<dbReference type="GeneID" id="98346558"/>
<dbReference type="KEGG" id="sas:SAS2137"/>
<dbReference type="HOGENOM" id="CLU_144911_0_1_9"/>
<dbReference type="GO" id="GO:0005737">
    <property type="term" value="C:cytoplasm"/>
    <property type="evidence" value="ECO:0007669"/>
    <property type="project" value="UniProtKB-ARBA"/>
</dbReference>
<dbReference type="GO" id="GO:0015935">
    <property type="term" value="C:small ribosomal subunit"/>
    <property type="evidence" value="ECO:0007669"/>
    <property type="project" value="InterPro"/>
</dbReference>
<dbReference type="GO" id="GO:0019843">
    <property type="term" value="F:rRNA binding"/>
    <property type="evidence" value="ECO:0007669"/>
    <property type="project" value="UniProtKB-UniRule"/>
</dbReference>
<dbReference type="GO" id="GO:0003735">
    <property type="term" value="F:structural constituent of ribosome"/>
    <property type="evidence" value="ECO:0007669"/>
    <property type="project" value="InterPro"/>
</dbReference>
<dbReference type="GO" id="GO:0000028">
    <property type="term" value="P:ribosomal small subunit assembly"/>
    <property type="evidence" value="ECO:0007669"/>
    <property type="project" value="TreeGrafter"/>
</dbReference>
<dbReference type="GO" id="GO:0006412">
    <property type="term" value="P:translation"/>
    <property type="evidence" value="ECO:0007669"/>
    <property type="project" value="UniProtKB-UniRule"/>
</dbReference>
<dbReference type="FunFam" id="3.30.860.10:FF:000001">
    <property type="entry name" value="30S ribosomal protein S19"/>
    <property type="match status" value="1"/>
</dbReference>
<dbReference type="Gene3D" id="3.30.860.10">
    <property type="entry name" value="30s Ribosomal Protein S19, Chain A"/>
    <property type="match status" value="1"/>
</dbReference>
<dbReference type="HAMAP" id="MF_00531">
    <property type="entry name" value="Ribosomal_uS19"/>
    <property type="match status" value="1"/>
</dbReference>
<dbReference type="InterPro" id="IPR002222">
    <property type="entry name" value="Ribosomal_uS19"/>
</dbReference>
<dbReference type="InterPro" id="IPR005732">
    <property type="entry name" value="Ribosomal_uS19_bac-type"/>
</dbReference>
<dbReference type="InterPro" id="IPR020934">
    <property type="entry name" value="Ribosomal_uS19_CS"/>
</dbReference>
<dbReference type="InterPro" id="IPR023575">
    <property type="entry name" value="Ribosomal_uS19_SF"/>
</dbReference>
<dbReference type="NCBIfam" id="TIGR01050">
    <property type="entry name" value="rpsS_bact"/>
    <property type="match status" value="1"/>
</dbReference>
<dbReference type="PANTHER" id="PTHR11880">
    <property type="entry name" value="RIBOSOMAL PROTEIN S19P FAMILY MEMBER"/>
    <property type="match status" value="1"/>
</dbReference>
<dbReference type="PANTHER" id="PTHR11880:SF8">
    <property type="entry name" value="SMALL RIBOSOMAL SUBUNIT PROTEIN US19M"/>
    <property type="match status" value="1"/>
</dbReference>
<dbReference type="Pfam" id="PF00203">
    <property type="entry name" value="Ribosomal_S19"/>
    <property type="match status" value="1"/>
</dbReference>
<dbReference type="PIRSF" id="PIRSF002144">
    <property type="entry name" value="Ribosomal_S19"/>
    <property type="match status" value="1"/>
</dbReference>
<dbReference type="PRINTS" id="PR00975">
    <property type="entry name" value="RIBOSOMALS19"/>
</dbReference>
<dbReference type="SUPFAM" id="SSF54570">
    <property type="entry name" value="Ribosomal protein S19"/>
    <property type="match status" value="1"/>
</dbReference>
<dbReference type="PROSITE" id="PS00323">
    <property type="entry name" value="RIBOSOMAL_S19"/>
    <property type="match status" value="1"/>
</dbReference>
<proteinExistence type="inferred from homology"/>